<proteinExistence type="evidence at protein level"/>
<keyword id="KW-0326">Glycosidase</keyword>
<keyword id="KW-0378">Hydrolase</keyword>
<name>BGAL_PYRWO</name>
<organism>
    <name type="scientific">Pyrococcus woesei</name>
    <dbReference type="NCBI Taxonomy" id="2262"/>
    <lineage>
        <taxon>Archaea</taxon>
        <taxon>Methanobacteriati</taxon>
        <taxon>Methanobacteriota</taxon>
        <taxon>Thermococci</taxon>
        <taxon>Thermococcales</taxon>
        <taxon>Thermococcaceae</taxon>
        <taxon>Pyrococcus</taxon>
    </lineage>
</organism>
<feature type="chain" id="PRO_0000063865" description="Beta-galactosidase">
    <location>
        <begin position="1"/>
        <end position="510"/>
    </location>
</feature>
<feature type="active site" description="Proton donor" evidence="1">
    <location>
        <position position="210"/>
    </location>
</feature>
<feature type="active site" description="Nucleophile" evidence="2">
    <location>
        <position position="414"/>
    </location>
</feature>
<sequence>MFPEKFLWGVAQSGFQFEMGDKLRRNIDTNTDWWHWVRDKTNIEKGLVSGDLPEEGINNYELYEKDHEIARKLGLNAYRIGIEWSRIFPWPTTFIDVDYSYNESYNLIEDVKITKDTLEELDEIANKREVAYYRSVINSLRSKGFKVIVNLNHFTLPYWLHDPIEARERALTNKRNGWVNPRTVIEFAKYAAYIAYKFGDIVDMWSTFNEPMVVVELGYLAPYSGFPPGVLNPEAAKLAILHMINAHALAYRQIKKFDTEKADKDSKEPAEVGIIYNNIGVAYPKDPNDSKDVKAAENDNFFHSGLFFEAIHKGKLNIEFDGETFIDAPYLKGNDWIGVNYYTREVVTYQEPMFPSIPLITFKGVQGYGYACRPGTLSKDDRPVSDIGWELYPEGMYDSIVEAHKYGVPVYVTENGIADSKDILRPYYIASHIKMTEKAFEDGYEVKGYFHWALTDNFEWALGFRMRFGLYEVNLITKERIPREKSVSIFREIVANNGVTKKIEEELLRG</sequence>
<evidence type="ECO:0000255" key="1"/>
<evidence type="ECO:0000255" key="2">
    <source>
        <dbReference type="PROSITE-ProRule" id="PRU10055"/>
    </source>
</evidence>
<evidence type="ECO:0000305" key="3"/>
<comment type="catalytic activity">
    <reaction>
        <text>Hydrolysis of terminal non-reducing beta-D-galactose residues in beta-D-galactosides.</text>
        <dbReference type="EC" id="3.2.1.23"/>
    </reaction>
</comment>
<comment type="biophysicochemical properties">
    <temperatureDependence>
        <text>This enzyme is thermostable.</text>
    </temperatureDependence>
</comment>
<comment type="similarity">
    <text evidence="3">Belongs to the glycosyl hydrolase 1 family.</text>
</comment>
<dbReference type="EC" id="3.2.1.23"/>
<dbReference type="EMBL" id="AF043283">
    <property type="protein sequence ID" value="AAB97862.1"/>
    <property type="molecule type" value="Genomic_DNA"/>
</dbReference>
<dbReference type="SMR" id="O52629"/>
<dbReference type="CAZy" id="GH1">
    <property type="family name" value="Glycoside Hydrolase Family 1"/>
</dbReference>
<dbReference type="BRENDA" id="3.2.1.23">
    <property type="organism ID" value="5249"/>
</dbReference>
<dbReference type="GO" id="GO:0004565">
    <property type="term" value="F:beta-galactosidase activity"/>
    <property type="evidence" value="ECO:0007669"/>
    <property type="project" value="UniProtKB-EC"/>
</dbReference>
<dbReference type="GO" id="GO:0008422">
    <property type="term" value="F:beta-glucosidase activity"/>
    <property type="evidence" value="ECO:0007669"/>
    <property type="project" value="TreeGrafter"/>
</dbReference>
<dbReference type="GO" id="GO:0005975">
    <property type="term" value="P:carbohydrate metabolic process"/>
    <property type="evidence" value="ECO:0007669"/>
    <property type="project" value="InterPro"/>
</dbReference>
<dbReference type="Gene3D" id="3.20.20.80">
    <property type="entry name" value="Glycosidases"/>
    <property type="match status" value="1"/>
</dbReference>
<dbReference type="InterPro" id="IPR053427">
    <property type="entry name" value="Beta-galactosidase"/>
</dbReference>
<dbReference type="InterPro" id="IPR001360">
    <property type="entry name" value="Glyco_hydro_1"/>
</dbReference>
<dbReference type="InterPro" id="IPR018120">
    <property type="entry name" value="Glyco_hydro_1_AS"/>
</dbReference>
<dbReference type="InterPro" id="IPR033132">
    <property type="entry name" value="Glyco_hydro_1_N_CS"/>
</dbReference>
<dbReference type="InterPro" id="IPR017853">
    <property type="entry name" value="Glycoside_hydrolase_SF"/>
</dbReference>
<dbReference type="NCBIfam" id="NF041004">
    <property type="entry name" value="Beta_gal_BgaS"/>
    <property type="match status" value="1"/>
</dbReference>
<dbReference type="PANTHER" id="PTHR10353:SF209">
    <property type="entry name" value="GALACTOLIPID GALACTOSYLTRANSFERASE SFR2, CHLOROPLASTIC"/>
    <property type="match status" value="1"/>
</dbReference>
<dbReference type="PANTHER" id="PTHR10353">
    <property type="entry name" value="GLYCOSYL HYDROLASE"/>
    <property type="match status" value="1"/>
</dbReference>
<dbReference type="Pfam" id="PF00232">
    <property type="entry name" value="Glyco_hydro_1"/>
    <property type="match status" value="2"/>
</dbReference>
<dbReference type="PRINTS" id="PR00131">
    <property type="entry name" value="GLHYDRLASE1"/>
</dbReference>
<dbReference type="SUPFAM" id="SSF51445">
    <property type="entry name" value="(Trans)glycosidases"/>
    <property type="match status" value="1"/>
</dbReference>
<dbReference type="PROSITE" id="PS00572">
    <property type="entry name" value="GLYCOSYL_HYDROL_F1_1"/>
    <property type="match status" value="1"/>
</dbReference>
<dbReference type="PROSITE" id="PS00653">
    <property type="entry name" value="GLYCOSYL_HYDROL_F1_2"/>
    <property type="match status" value="1"/>
</dbReference>
<protein>
    <recommendedName>
        <fullName>Beta-galactosidase</fullName>
        <shortName>Lactase</shortName>
        <ecNumber>3.2.1.23</ecNumber>
    </recommendedName>
</protein>
<reference key="1">
    <citation type="journal article" date="2000" name="Protein Expr. Purif.">
        <title>Cloning, expression, and purification of the His(6)-tagged thermostable beta-galactosidase from Pyrococcus woesei in Escherichia coli and some properties of the isolated enzyme.</title>
        <authorList>
            <person name="Daabrowski S."/>
            <person name="Sobiewska G."/>
            <person name="Maciunska J."/>
            <person name="Synowiecki J."/>
            <person name="Kur J."/>
        </authorList>
    </citation>
    <scope>NUCLEOTIDE SEQUENCE [GENOMIC DNA]</scope>
    <scope>CHARACTERIZATION</scope>
    <source>
        <strain>ATCC 49860 / DSM 3773 / JCM 8421 / Vul4</strain>
    </source>
</reference>
<accession>O52629</accession>